<comment type="function">
    <text evidence="1">Catalyzes the oxidation of 3-carboxy-2-hydroxy-4-methylpentanoate (3-isopropylmalate) to 3-carboxy-4-methyl-2-oxopentanoate. The product decarboxylates to 4-methyl-2 oxopentanoate.</text>
</comment>
<comment type="catalytic activity">
    <reaction evidence="1">
        <text>(2R,3S)-3-isopropylmalate + NAD(+) = 4-methyl-2-oxopentanoate + CO2 + NADH</text>
        <dbReference type="Rhea" id="RHEA:32271"/>
        <dbReference type="ChEBI" id="CHEBI:16526"/>
        <dbReference type="ChEBI" id="CHEBI:17865"/>
        <dbReference type="ChEBI" id="CHEBI:35121"/>
        <dbReference type="ChEBI" id="CHEBI:57540"/>
        <dbReference type="ChEBI" id="CHEBI:57945"/>
        <dbReference type="EC" id="1.1.1.85"/>
    </reaction>
</comment>
<comment type="cofactor">
    <cofactor evidence="1">
        <name>Mg(2+)</name>
        <dbReference type="ChEBI" id="CHEBI:18420"/>
    </cofactor>
    <cofactor evidence="1">
        <name>Mn(2+)</name>
        <dbReference type="ChEBI" id="CHEBI:29035"/>
    </cofactor>
    <text evidence="1">Binds 1 Mg(2+) or Mn(2+) ion per subunit.</text>
</comment>
<comment type="pathway">
    <text evidence="1">Amino-acid biosynthesis; L-leucine biosynthesis; L-leucine from 3-methyl-2-oxobutanoate: step 3/4.</text>
</comment>
<comment type="subunit">
    <text evidence="1">Homodimer.</text>
</comment>
<comment type="subcellular location">
    <subcellularLocation>
        <location evidence="1">Cytoplasm</location>
    </subcellularLocation>
</comment>
<comment type="similarity">
    <text evidence="1">Belongs to the isocitrate and isopropylmalate dehydrogenases family. LeuB type 1 subfamily.</text>
</comment>
<sequence>MASRKLLLLPGDGIGPEAMAEVRKVIAFLNSDLNLGFETEEGLVGGCAYDAHGQAISDADMEKALAADSVLFGAVGGPKWDSVPYEVRPEAGLLRLRKDMQLYANLRPAICYPALAHSSSLKPEVIEGLDILILRELTGGVYFGEPKEIIDLGNGQKRGIDTQVYDTYEIERIADVAFELARTRRNKVTSMEKRNVMKSGVLWNQGVTARHKEKHADVQLEHMLADAGGMQLVRWPKQFDVILTDNLFGDLLSDVAAMLTGSLGMLPSASLGAADSKTGKRKALYEPVHGSAPDIAGKGIANPIAMIASLAMCLRYSFGLVAEADRLEAAIAGVLDDGIRTADIWSEGNTKVGTTEMGDAILAKFKALSA</sequence>
<name>LEU3_BRUA2</name>
<protein>
    <recommendedName>
        <fullName evidence="1">3-isopropylmalate dehydrogenase</fullName>
        <ecNumber evidence="1">1.1.1.85</ecNumber>
    </recommendedName>
    <alternativeName>
        <fullName evidence="1">3-IPM-DH</fullName>
    </alternativeName>
    <alternativeName>
        <fullName evidence="1">Beta-IPM dehydrogenase</fullName>
        <shortName evidence="1">IMDH</shortName>
    </alternativeName>
</protein>
<organism>
    <name type="scientific">Brucella abortus (strain 2308)</name>
    <dbReference type="NCBI Taxonomy" id="359391"/>
    <lineage>
        <taxon>Bacteria</taxon>
        <taxon>Pseudomonadati</taxon>
        <taxon>Pseudomonadota</taxon>
        <taxon>Alphaproteobacteria</taxon>
        <taxon>Hyphomicrobiales</taxon>
        <taxon>Brucellaceae</taxon>
        <taxon>Brucella/Ochrobactrum group</taxon>
        <taxon>Brucella</taxon>
    </lineage>
</organism>
<reference key="1">
    <citation type="journal article" date="2005" name="Infect. Immun.">
        <title>Whole-genome analyses of speciation events in pathogenic Brucellae.</title>
        <authorList>
            <person name="Chain P.S."/>
            <person name="Comerci D.J."/>
            <person name="Tolmasky M.E."/>
            <person name="Larimer F.W."/>
            <person name="Malfatti S.A."/>
            <person name="Vergez L.M."/>
            <person name="Aguero F."/>
            <person name="Land M.L."/>
            <person name="Ugalde R.A."/>
            <person name="Garcia E."/>
        </authorList>
    </citation>
    <scope>NUCLEOTIDE SEQUENCE [LARGE SCALE GENOMIC DNA]</scope>
    <source>
        <strain>2308</strain>
    </source>
</reference>
<feature type="chain" id="PRO_0000250106" description="3-isopropylmalate dehydrogenase">
    <location>
        <begin position="1"/>
        <end position="370"/>
    </location>
</feature>
<feature type="binding site" evidence="1">
    <location>
        <begin position="77"/>
        <end position="90"/>
    </location>
    <ligand>
        <name>NAD(+)</name>
        <dbReference type="ChEBI" id="CHEBI:57540"/>
    </ligand>
</feature>
<feature type="binding site" evidence="1">
    <location>
        <position position="97"/>
    </location>
    <ligand>
        <name>substrate</name>
    </ligand>
</feature>
<feature type="binding site" evidence="1">
    <location>
        <position position="107"/>
    </location>
    <ligand>
        <name>substrate</name>
    </ligand>
</feature>
<feature type="binding site" evidence="1">
    <location>
        <position position="135"/>
    </location>
    <ligand>
        <name>substrate</name>
    </ligand>
</feature>
<feature type="binding site" evidence="1">
    <location>
        <position position="226"/>
    </location>
    <ligand>
        <name>Mg(2+)</name>
        <dbReference type="ChEBI" id="CHEBI:18420"/>
    </ligand>
</feature>
<feature type="binding site" evidence="1">
    <location>
        <position position="226"/>
    </location>
    <ligand>
        <name>substrate</name>
    </ligand>
</feature>
<feature type="binding site" evidence="1">
    <location>
        <position position="250"/>
    </location>
    <ligand>
        <name>Mg(2+)</name>
        <dbReference type="ChEBI" id="CHEBI:18420"/>
    </ligand>
</feature>
<feature type="binding site" evidence="1">
    <location>
        <position position="254"/>
    </location>
    <ligand>
        <name>Mg(2+)</name>
        <dbReference type="ChEBI" id="CHEBI:18420"/>
    </ligand>
</feature>
<feature type="binding site" evidence="1">
    <location>
        <begin position="290"/>
        <end position="302"/>
    </location>
    <ligand>
        <name>NAD(+)</name>
        <dbReference type="ChEBI" id="CHEBI:57540"/>
    </ligand>
</feature>
<feature type="site" description="Important for catalysis" evidence="1">
    <location>
        <position position="142"/>
    </location>
</feature>
<feature type="site" description="Important for catalysis" evidence="1">
    <location>
        <position position="193"/>
    </location>
</feature>
<dbReference type="EC" id="1.1.1.85" evidence="1"/>
<dbReference type="EMBL" id="AM040265">
    <property type="protein sequence ID" value="CAJ12512.1"/>
    <property type="molecule type" value="Genomic_DNA"/>
</dbReference>
<dbReference type="RefSeq" id="WP_002965756.1">
    <property type="nucleotide sequence ID" value="NZ_KN046823.1"/>
</dbReference>
<dbReference type="SMR" id="Q2YL58"/>
<dbReference type="STRING" id="359391.BAB2_0346"/>
<dbReference type="GeneID" id="93015715"/>
<dbReference type="KEGG" id="bmf:BAB2_0346"/>
<dbReference type="PATRIC" id="fig|359391.11.peg.2300"/>
<dbReference type="HOGENOM" id="CLU_031953_0_3_5"/>
<dbReference type="PhylomeDB" id="Q2YL58"/>
<dbReference type="UniPathway" id="UPA00048">
    <property type="reaction ID" value="UER00072"/>
</dbReference>
<dbReference type="Proteomes" id="UP000002719">
    <property type="component" value="Chromosome II"/>
</dbReference>
<dbReference type="GO" id="GO:0005829">
    <property type="term" value="C:cytosol"/>
    <property type="evidence" value="ECO:0007669"/>
    <property type="project" value="TreeGrafter"/>
</dbReference>
<dbReference type="GO" id="GO:0003862">
    <property type="term" value="F:3-isopropylmalate dehydrogenase activity"/>
    <property type="evidence" value="ECO:0007669"/>
    <property type="project" value="UniProtKB-UniRule"/>
</dbReference>
<dbReference type="GO" id="GO:0000287">
    <property type="term" value="F:magnesium ion binding"/>
    <property type="evidence" value="ECO:0007669"/>
    <property type="project" value="InterPro"/>
</dbReference>
<dbReference type="GO" id="GO:0051287">
    <property type="term" value="F:NAD binding"/>
    <property type="evidence" value="ECO:0007669"/>
    <property type="project" value="InterPro"/>
</dbReference>
<dbReference type="GO" id="GO:0009098">
    <property type="term" value="P:L-leucine biosynthetic process"/>
    <property type="evidence" value="ECO:0007669"/>
    <property type="project" value="UniProtKB-UniRule"/>
</dbReference>
<dbReference type="FunFam" id="3.40.718.10:FF:000006">
    <property type="entry name" value="3-isopropylmalate dehydrogenase"/>
    <property type="match status" value="1"/>
</dbReference>
<dbReference type="Gene3D" id="3.40.718.10">
    <property type="entry name" value="Isopropylmalate Dehydrogenase"/>
    <property type="match status" value="1"/>
</dbReference>
<dbReference type="HAMAP" id="MF_01033">
    <property type="entry name" value="LeuB_type1"/>
    <property type="match status" value="1"/>
</dbReference>
<dbReference type="InterPro" id="IPR019818">
    <property type="entry name" value="IsoCit/isopropylmalate_DH_CS"/>
</dbReference>
<dbReference type="InterPro" id="IPR024084">
    <property type="entry name" value="IsoPropMal-DH-like_dom"/>
</dbReference>
<dbReference type="InterPro" id="IPR004429">
    <property type="entry name" value="Isopropylmalate_DH"/>
</dbReference>
<dbReference type="NCBIfam" id="TIGR00169">
    <property type="entry name" value="leuB"/>
    <property type="match status" value="1"/>
</dbReference>
<dbReference type="PANTHER" id="PTHR42979">
    <property type="entry name" value="3-ISOPROPYLMALATE DEHYDROGENASE"/>
    <property type="match status" value="1"/>
</dbReference>
<dbReference type="PANTHER" id="PTHR42979:SF1">
    <property type="entry name" value="3-ISOPROPYLMALATE DEHYDROGENASE"/>
    <property type="match status" value="1"/>
</dbReference>
<dbReference type="Pfam" id="PF00180">
    <property type="entry name" value="Iso_dh"/>
    <property type="match status" value="1"/>
</dbReference>
<dbReference type="SMART" id="SM01329">
    <property type="entry name" value="Iso_dh"/>
    <property type="match status" value="1"/>
</dbReference>
<dbReference type="SUPFAM" id="SSF53659">
    <property type="entry name" value="Isocitrate/Isopropylmalate dehydrogenase-like"/>
    <property type="match status" value="1"/>
</dbReference>
<dbReference type="PROSITE" id="PS00470">
    <property type="entry name" value="IDH_IMDH"/>
    <property type="match status" value="1"/>
</dbReference>
<evidence type="ECO:0000255" key="1">
    <source>
        <dbReference type="HAMAP-Rule" id="MF_01033"/>
    </source>
</evidence>
<keyword id="KW-0028">Amino-acid biosynthesis</keyword>
<keyword id="KW-0100">Branched-chain amino acid biosynthesis</keyword>
<keyword id="KW-0963">Cytoplasm</keyword>
<keyword id="KW-0432">Leucine biosynthesis</keyword>
<keyword id="KW-0460">Magnesium</keyword>
<keyword id="KW-0464">Manganese</keyword>
<keyword id="KW-0479">Metal-binding</keyword>
<keyword id="KW-0520">NAD</keyword>
<keyword id="KW-0560">Oxidoreductase</keyword>
<keyword id="KW-1185">Reference proteome</keyword>
<accession>Q2YL58</accession>
<gene>
    <name evidence="1" type="primary">leuB</name>
    <name type="ordered locus">BAB2_0346</name>
</gene>
<proteinExistence type="inferred from homology"/>